<name>RS29_PLUXY</name>
<accession>Q6F473</accession>
<feature type="chain" id="PRO_0000268806" description="Small ribosomal subunit protein uS14">
    <location>
        <begin position="1"/>
        <end position="56"/>
    </location>
</feature>
<feature type="binding site" evidence="4">
    <location>
        <position position="21"/>
    </location>
    <ligand>
        <name>Zn(2+)</name>
        <dbReference type="ChEBI" id="CHEBI:29105"/>
    </ligand>
</feature>
<feature type="binding site" evidence="4">
    <location>
        <position position="24"/>
    </location>
    <ligand>
        <name>Zn(2+)</name>
        <dbReference type="ChEBI" id="CHEBI:29105"/>
    </ligand>
</feature>
<feature type="binding site" evidence="4">
    <location>
        <position position="39"/>
    </location>
    <ligand>
        <name>Zn(2+)</name>
        <dbReference type="ChEBI" id="CHEBI:29105"/>
    </ligand>
</feature>
<feature type="binding site" evidence="4">
    <location>
        <position position="42"/>
    </location>
    <ligand>
        <name>Zn(2+)</name>
        <dbReference type="ChEBI" id="CHEBI:29105"/>
    </ligand>
</feature>
<gene>
    <name type="primary">RpS29</name>
</gene>
<proteinExistence type="inferred from homology"/>
<reference key="1">
    <citation type="submission" date="2004-07" db="EMBL/GenBank/DDBJ databases">
        <title>Construction and EST analysis of full-length cDNA libraries from immunized diamond back moth, Plutella xylostella.</title>
        <authorList>
            <person name="Eum J.H."/>
            <person name="Yoe S.M."/>
            <person name="Seo Y.R."/>
            <person name="Kang S.W."/>
            <person name="Han S.S."/>
        </authorList>
    </citation>
    <scope>NUCLEOTIDE SEQUENCE [LARGE SCALE MRNA]</scope>
</reference>
<evidence type="ECO:0000250" key="1">
    <source>
        <dbReference type="UniProtKB" id="P62273"/>
    </source>
</evidence>
<evidence type="ECO:0000250" key="2">
    <source>
        <dbReference type="UniProtKB" id="Q6QAP6"/>
    </source>
</evidence>
<evidence type="ECO:0000250" key="3">
    <source>
        <dbReference type="UniProtKB" id="Q9VH69"/>
    </source>
</evidence>
<evidence type="ECO:0000255" key="4"/>
<evidence type="ECO:0000305" key="5"/>
<sequence>MGHANIWYSHPRKYGQGSRSCRACSNRHGLIRKYGLNICRQCFREYANDIGFKKLD</sequence>
<organism>
    <name type="scientific">Plutella xylostella</name>
    <name type="common">Diamondback moth</name>
    <name type="synonym">Plutella maculipennis</name>
    <dbReference type="NCBI Taxonomy" id="51655"/>
    <lineage>
        <taxon>Eukaryota</taxon>
        <taxon>Metazoa</taxon>
        <taxon>Ecdysozoa</taxon>
        <taxon>Arthropoda</taxon>
        <taxon>Hexapoda</taxon>
        <taxon>Insecta</taxon>
        <taxon>Pterygota</taxon>
        <taxon>Neoptera</taxon>
        <taxon>Endopterygota</taxon>
        <taxon>Lepidoptera</taxon>
        <taxon>Glossata</taxon>
        <taxon>Ditrysia</taxon>
        <taxon>Yponomeutoidea</taxon>
        <taxon>Plutellidae</taxon>
        <taxon>Plutella</taxon>
    </lineage>
</organism>
<dbReference type="EMBL" id="AB180417">
    <property type="protein sequence ID" value="BAD26661.1"/>
    <property type="molecule type" value="mRNA"/>
</dbReference>
<dbReference type="SMR" id="Q6F473"/>
<dbReference type="GeneID" id="105382390"/>
<dbReference type="KEGG" id="pxy:105382390"/>
<dbReference type="CTD" id="6235"/>
<dbReference type="OrthoDB" id="10252683at2759"/>
<dbReference type="GO" id="GO:0022627">
    <property type="term" value="C:cytosolic small ribosomal subunit"/>
    <property type="evidence" value="ECO:0000250"/>
    <property type="project" value="UniProtKB"/>
</dbReference>
<dbReference type="GO" id="GO:0005840">
    <property type="term" value="C:ribosome"/>
    <property type="evidence" value="ECO:0000250"/>
    <property type="project" value="UniProtKB"/>
</dbReference>
<dbReference type="GO" id="GO:0005791">
    <property type="term" value="C:rough endoplasmic reticulum"/>
    <property type="evidence" value="ECO:0007669"/>
    <property type="project" value="UniProtKB-SubCell"/>
</dbReference>
<dbReference type="GO" id="GO:0003735">
    <property type="term" value="F:structural constituent of ribosome"/>
    <property type="evidence" value="ECO:0007669"/>
    <property type="project" value="InterPro"/>
</dbReference>
<dbReference type="GO" id="GO:0008270">
    <property type="term" value="F:zinc ion binding"/>
    <property type="evidence" value="ECO:0000250"/>
    <property type="project" value="UniProtKB"/>
</dbReference>
<dbReference type="GO" id="GO:0002181">
    <property type="term" value="P:cytoplasmic translation"/>
    <property type="evidence" value="ECO:0000250"/>
    <property type="project" value="UniProtKB"/>
</dbReference>
<dbReference type="FunFam" id="4.10.830.10:FF:000002">
    <property type="entry name" value="40S ribosomal protein S29"/>
    <property type="match status" value="1"/>
</dbReference>
<dbReference type="Gene3D" id="4.10.830.10">
    <property type="entry name" value="30s Ribosomal Protein S14, Chain N"/>
    <property type="match status" value="1"/>
</dbReference>
<dbReference type="InterPro" id="IPR001209">
    <property type="entry name" value="Ribosomal_uS14"/>
</dbReference>
<dbReference type="InterPro" id="IPR018271">
    <property type="entry name" value="Ribosomal_uS14_CS"/>
</dbReference>
<dbReference type="InterPro" id="IPR039744">
    <property type="entry name" value="RIbosomal_uS14_euk_arc"/>
</dbReference>
<dbReference type="InterPro" id="IPR043140">
    <property type="entry name" value="Ribosomal_uS14_sf"/>
</dbReference>
<dbReference type="NCBIfam" id="NF004424">
    <property type="entry name" value="PRK05766.1"/>
    <property type="match status" value="1"/>
</dbReference>
<dbReference type="PANTHER" id="PTHR12010">
    <property type="entry name" value="40S RIBOSOMAL PROTEIN S29"/>
    <property type="match status" value="1"/>
</dbReference>
<dbReference type="PANTHER" id="PTHR12010:SF2">
    <property type="entry name" value="40S RIBOSOMAL PROTEIN S29"/>
    <property type="match status" value="1"/>
</dbReference>
<dbReference type="Pfam" id="PF00253">
    <property type="entry name" value="Ribosomal_S14"/>
    <property type="match status" value="1"/>
</dbReference>
<dbReference type="PROSITE" id="PS00527">
    <property type="entry name" value="RIBOSOMAL_S14"/>
    <property type="match status" value="1"/>
</dbReference>
<protein>
    <recommendedName>
        <fullName evidence="5">Small ribosomal subunit protein uS14</fullName>
    </recommendedName>
    <alternativeName>
        <fullName>40S ribosomal protein S29</fullName>
    </alternativeName>
</protein>
<comment type="cofactor">
    <cofactor evidence="1">
        <name>Zn(2+)</name>
        <dbReference type="ChEBI" id="CHEBI:29105"/>
    </cofactor>
    <text evidence="1">Binds 1 zinc ion per subunit.</text>
</comment>
<comment type="subunit">
    <text evidence="3">Component of the 40S small ribosomal subunit.</text>
</comment>
<comment type="subcellular location">
    <subcellularLocation>
        <location evidence="1">Cytoplasm</location>
        <location evidence="1">Cytosol</location>
    </subcellularLocation>
    <subcellularLocation>
        <location evidence="1">Cytoplasm</location>
    </subcellularLocation>
    <subcellularLocation>
        <location evidence="2">Rough endoplasmic reticulum</location>
    </subcellularLocation>
    <text evidence="1 2">Detected on cytosolic polysomes (By similarity). Detected in ribosomes that are associated with the rough endoplasmic reticulum (By similarity).</text>
</comment>
<comment type="similarity">
    <text evidence="5">Belongs to the universal ribosomal protein uS14 family.</text>
</comment>
<keyword id="KW-0963">Cytoplasm</keyword>
<keyword id="KW-0256">Endoplasmic reticulum</keyword>
<keyword id="KW-0479">Metal-binding</keyword>
<keyword id="KW-0687">Ribonucleoprotein</keyword>
<keyword id="KW-0689">Ribosomal protein</keyword>
<keyword id="KW-0862">Zinc</keyword>